<reference key="1">
    <citation type="journal article" date="2010" name="J. Bacteriol.">
        <title>Complete genome sequence of Beijerinckia indica subsp. indica.</title>
        <authorList>
            <person name="Tamas I."/>
            <person name="Dedysh S.N."/>
            <person name="Liesack W."/>
            <person name="Stott M.B."/>
            <person name="Alam M."/>
            <person name="Murrell J.C."/>
            <person name="Dunfield P.F."/>
        </authorList>
    </citation>
    <scope>NUCLEOTIDE SEQUENCE [LARGE SCALE GENOMIC DNA]</scope>
    <source>
        <strain>ATCC 9039 / DSM 1715 / NCIMB 8712</strain>
    </source>
</reference>
<accession>B2IDV5</accession>
<keyword id="KW-0997">Cell inner membrane</keyword>
<keyword id="KW-1003">Cell membrane</keyword>
<keyword id="KW-0143">Chaperone</keyword>
<keyword id="KW-0472">Membrane</keyword>
<keyword id="KW-0653">Protein transport</keyword>
<keyword id="KW-1185">Reference proteome</keyword>
<keyword id="KW-0812">Transmembrane</keyword>
<keyword id="KW-1133">Transmembrane helix</keyword>
<keyword id="KW-0813">Transport</keyword>
<name>YIDC_BEII9</name>
<organism>
    <name type="scientific">Beijerinckia indica subsp. indica (strain ATCC 9039 / DSM 1715 / NCIMB 8712)</name>
    <dbReference type="NCBI Taxonomy" id="395963"/>
    <lineage>
        <taxon>Bacteria</taxon>
        <taxon>Pseudomonadati</taxon>
        <taxon>Pseudomonadota</taxon>
        <taxon>Alphaproteobacteria</taxon>
        <taxon>Hyphomicrobiales</taxon>
        <taxon>Beijerinckiaceae</taxon>
        <taxon>Beijerinckia</taxon>
    </lineage>
</organism>
<protein>
    <recommendedName>
        <fullName evidence="1">Membrane protein insertase YidC</fullName>
    </recommendedName>
    <alternativeName>
        <fullName evidence="1">Foldase YidC</fullName>
    </alternativeName>
    <alternativeName>
        <fullName evidence="1">Membrane integrase YidC</fullName>
    </alternativeName>
    <alternativeName>
        <fullName evidence="1">Membrane protein YidC</fullName>
    </alternativeName>
</protein>
<dbReference type="EMBL" id="CP001016">
    <property type="protein sequence ID" value="ACB96887.1"/>
    <property type="molecule type" value="Genomic_DNA"/>
</dbReference>
<dbReference type="RefSeq" id="WP_012386235.1">
    <property type="nucleotide sequence ID" value="NC_010581.1"/>
</dbReference>
<dbReference type="SMR" id="B2IDV5"/>
<dbReference type="STRING" id="395963.Bind_3328"/>
<dbReference type="KEGG" id="bid:Bind_3328"/>
<dbReference type="eggNOG" id="COG0706">
    <property type="taxonomic scope" value="Bacteria"/>
</dbReference>
<dbReference type="HOGENOM" id="CLU_016535_1_0_5"/>
<dbReference type="OrthoDB" id="9780552at2"/>
<dbReference type="Proteomes" id="UP000001695">
    <property type="component" value="Chromosome"/>
</dbReference>
<dbReference type="GO" id="GO:0005886">
    <property type="term" value="C:plasma membrane"/>
    <property type="evidence" value="ECO:0007669"/>
    <property type="project" value="UniProtKB-SubCell"/>
</dbReference>
<dbReference type="GO" id="GO:0032977">
    <property type="term" value="F:membrane insertase activity"/>
    <property type="evidence" value="ECO:0007669"/>
    <property type="project" value="InterPro"/>
</dbReference>
<dbReference type="GO" id="GO:0051205">
    <property type="term" value="P:protein insertion into membrane"/>
    <property type="evidence" value="ECO:0007669"/>
    <property type="project" value="TreeGrafter"/>
</dbReference>
<dbReference type="GO" id="GO:0015031">
    <property type="term" value="P:protein transport"/>
    <property type="evidence" value="ECO:0007669"/>
    <property type="project" value="UniProtKB-KW"/>
</dbReference>
<dbReference type="CDD" id="cd20070">
    <property type="entry name" value="5TM_YidC_Alb3"/>
    <property type="match status" value="1"/>
</dbReference>
<dbReference type="CDD" id="cd19961">
    <property type="entry name" value="EcYidC-like_peri"/>
    <property type="match status" value="1"/>
</dbReference>
<dbReference type="Gene3D" id="2.70.98.90">
    <property type="match status" value="1"/>
</dbReference>
<dbReference type="HAMAP" id="MF_01810">
    <property type="entry name" value="YidC_type1"/>
    <property type="match status" value="1"/>
</dbReference>
<dbReference type="InterPro" id="IPR019998">
    <property type="entry name" value="Membr_insert_YidC"/>
</dbReference>
<dbReference type="InterPro" id="IPR028053">
    <property type="entry name" value="Membr_insert_YidC_N"/>
</dbReference>
<dbReference type="InterPro" id="IPR001708">
    <property type="entry name" value="YidC/ALB3/OXA1/COX18"/>
</dbReference>
<dbReference type="InterPro" id="IPR028055">
    <property type="entry name" value="YidC/Oxa/ALB_C"/>
</dbReference>
<dbReference type="InterPro" id="IPR047196">
    <property type="entry name" value="YidC_ALB_C"/>
</dbReference>
<dbReference type="InterPro" id="IPR038221">
    <property type="entry name" value="YidC_periplasmic_sf"/>
</dbReference>
<dbReference type="NCBIfam" id="NF002353">
    <property type="entry name" value="PRK01318.1-4"/>
    <property type="match status" value="1"/>
</dbReference>
<dbReference type="NCBIfam" id="TIGR03593">
    <property type="entry name" value="yidC_nterm"/>
    <property type="match status" value="1"/>
</dbReference>
<dbReference type="NCBIfam" id="TIGR03592">
    <property type="entry name" value="yidC_oxa1_cterm"/>
    <property type="match status" value="1"/>
</dbReference>
<dbReference type="PANTHER" id="PTHR12428:SF65">
    <property type="entry name" value="CYTOCHROME C OXIDASE ASSEMBLY PROTEIN COX18, MITOCHONDRIAL"/>
    <property type="match status" value="1"/>
</dbReference>
<dbReference type="PANTHER" id="PTHR12428">
    <property type="entry name" value="OXA1"/>
    <property type="match status" value="1"/>
</dbReference>
<dbReference type="Pfam" id="PF02096">
    <property type="entry name" value="60KD_IMP"/>
    <property type="match status" value="1"/>
</dbReference>
<dbReference type="Pfam" id="PF14849">
    <property type="entry name" value="YidC_periplas"/>
    <property type="match status" value="1"/>
</dbReference>
<dbReference type="PRINTS" id="PR00701">
    <property type="entry name" value="60KDINNERMP"/>
</dbReference>
<dbReference type="PRINTS" id="PR01900">
    <property type="entry name" value="YIDCPROTEIN"/>
</dbReference>
<proteinExistence type="inferred from homology"/>
<evidence type="ECO:0000255" key="1">
    <source>
        <dbReference type="HAMAP-Rule" id="MF_01810"/>
    </source>
</evidence>
<evidence type="ECO:0000256" key="2">
    <source>
        <dbReference type="SAM" id="MobiDB-lite"/>
    </source>
</evidence>
<gene>
    <name evidence="1" type="primary">yidC</name>
    <name type="ordered locus">Bind_3328</name>
</gene>
<sequence>MKQDSRNLYLAIGLSLLVLIGWNYFFAGPQVEKARQAQIVREQQAQTQTTSDTTARSDLNVPGQRSLPGESPQTQLSRPEALAASPRVKLDTPNLFGSINLRGARIDDVSLKAYRETVAKDSPNIVLLSPSGTPAPYYADAGFVAPAEAGLLLPKSDTLWSADREVLTPEAPVTLTYDNGQGLIFHRTISVDDRFMFTLTDKVENKTDKPVTLYPYSLVSRHGRPVTAGYAVLHEGMVGVIGDNGLQEITYDKIHKEENATKSFKGTGGWLGFTDKYWAAVIAPDQATPFEGRFSERGTTTPLYQTDALGPALTIAPGGTGGDMSRLFAGAKETQTLDDYRNELGIKKFDLLIDWGYFYFITRPMFWILHTIYQVVGNFGVAILCITVLVKAVFFPLANRSYLSMAKMKAIQPQMLALRERYADDKVKQQQELMELYKREKINPVAGCLPMLIQIPVFFALYKVLFVTIEMRQAPFFGWIRDLSAPDPTNIFNLFGLLPFDPTHLPMIGHFLAIGIWPLIMGVSMFFQMKMNPEPADPVQKQMFSWMPVIFTFMLGTFPSGLVIYWTWNNTLSVLQQSLIMKRAGVKVELWDNLMSTFRKKAVT</sequence>
<feature type="chain" id="PRO_1000187630" description="Membrane protein insertase YidC">
    <location>
        <begin position="1"/>
        <end position="604"/>
    </location>
</feature>
<feature type="transmembrane region" description="Helical" evidence="1">
    <location>
        <begin position="8"/>
        <end position="28"/>
    </location>
</feature>
<feature type="transmembrane region" description="Helical" evidence="1">
    <location>
        <begin position="349"/>
        <end position="369"/>
    </location>
</feature>
<feature type="transmembrane region" description="Helical" evidence="1">
    <location>
        <begin position="375"/>
        <end position="395"/>
    </location>
</feature>
<feature type="transmembrane region" description="Helical" evidence="1">
    <location>
        <begin position="449"/>
        <end position="469"/>
    </location>
</feature>
<feature type="transmembrane region" description="Helical" evidence="1">
    <location>
        <begin position="507"/>
        <end position="527"/>
    </location>
</feature>
<feature type="transmembrane region" description="Helical" evidence="1">
    <location>
        <begin position="546"/>
        <end position="566"/>
    </location>
</feature>
<feature type="region of interest" description="Disordered" evidence="2">
    <location>
        <begin position="42"/>
        <end position="84"/>
    </location>
</feature>
<feature type="compositionally biased region" description="Low complexity" evidence="2">
    <location>
        <begin position="43"/>
        <end position="58"/>
    </location>
</feature>
<comment type="function">
    <text evidence="1">Required for the insertion and/or proper folding and/or complex formation of integral membrane proteins into the membrane. Involved in integration of membrane proteins that insert both dependently and independently of the Sec translocase complex, as well as at least some lipoproteins. Aids folding of multispanning membrane proteins.</text>
</comment>
<comment type="subunit">
    <text evidence="1">Interacts with the Sec translocase complex via SecD. Specifically interacts with transmembrane segments of nascent integral membrane proteins during membrane integration.</text>
</comment>
<comment type="subcellular location">
    <subcellularLocation>
        <location evidence="1">Cell inner membrane</location>
        <topology evidence="1">Multi-pass membrane protein</topology>
    </subcellularLocation>
</comment>
<comment type="similarity">
    <text evidence="1">Belongs to the OXA1/ALB3/YidC family. Type 1 subfamily.</text>
</comment>